<evidence type="ECO:0000255" key="1">
    <source>
        <dbReference type="HAMAP-Rule" id="MF_00291"/>
    </source>
</evidence>
<evidence type="ECO:0000256" key="2">
    <source>
        <dbReference type="SAM" id="MobiDB-lite"/>
    </source>
</evidence>
<evidence type="ECO:0000305" key="3"/>
<proteinExistence type="inferred from homology"/>
<accession>C4K1A0</accession>
<protein>
    <recommendedName>
        <fullName evidence="1">Small ribosomal subunit protein uS2</fullName>
    </recommendedName>
    <alternativeName>
        <fullName evidence="3">30S ribosomal protein S2</fullName>
    </alternativeName>
</protein>
<dbReference type="EMBL" id="CP001227">
    <property type="protein sequence ID" value="ACR47351.1"/>
    <property type="molecule type" value="Genomic_DNA"/>
</dbReference>
<dbReference type="RefSeq" id="WP_012736609.1">
    <property type="nucleotide sequence ID" value="NC_012730.1"/>
</dbReference>
<dbReference type="SMR" id="C4K1A0"/>
<dbReference type="KEGG" id="rpk:RPR_02665"/>
<dbReference type="HOGENOM" id="CLU_040318_2_1_5"/>
<dbReference type="Proteomes" id="UP000005015">
    <property type="component" value="Chromosome"/>
</dbReference>
<dbReference type="GO" id="GO:0022627">
    <property type="term" value="C:cytosolic small ribosomal subunit"/>
    <property type="evidence" value="ECO:0007669"/>
    <property type="project" value="TreeGrafter"/>
</dbReference>
<dbReference type="GO" id="GO:0003735">
    <property type="term" value="F:structural constituent of ribosome"/>
    <property type="evidence" value="ECO:0007669"/>
    <property type="project" value="InterPro"/>
</dbReference>
<dbReference type="GO" id="GO:0006412">
    <property type="term" value="P:translation"/>
    <property type="evidence" value="ECO:0007669"/>
    <property type="project" value="UniProtKB-UniRule"/>
</dbReference>
<dbReference type="CDD" id="cd01425">
    <property type="entry name" value="RPS2"/>
    <property type="match status" value="1"/>
</dbReference>
<dbReference type="Gene3D" id="3.40.50.10490">
    <property type="entry name" value="Glucose-6-phosphate isomerase like protein, domain 1"/>
    <property type="match status" value="1"/>
</dbReference>
<dbReference type="Gene3D" id="1.10.287.610">
    <property type="entry name" value="Helix hairpin bin"/>
    <property type="match status" value="1"/>
</dbReference>
<dbReference type="HAMAP" id="MF_00291_B">
    <property type="entry name" value="Ribosomal_uS2_B"/>
    <property type="match status" value="1"/>
</dbReference>
<dbReference type="InterPro" id="IPR001865">
    <property type="entry name" value="Ribosomal_uS2"/>
</dbReference>
<dbReference type="InterPro" id="IPR005706">
    <property type="entry name" value="Ribosomal_uS2_bac/mit/plastid"/>
</dbReference>
<dbReference type="InterPro" id="IPR018130">
    <property type="entry name" value="Ribosomal_uS2_CS"/>
</dbReference>
<dbReference type="InterPro" id="IPR023591">
    <property type="entry name" value="Ribosomal_uS2_flav_dom_sf"/>
</dbReference>
<dbReference type="NCBIfam" id="TIGR01011">
    <property type="entry name" value="rpsB_bact"/>
    <property type="match status" value="1"/>
</dbReference>
<dbReference type="PANTHER" id="PTHR12534">
    <property type="entry name" value="30S RIBOSOMAL PROTEIN S2 PROKARYOTIC AND ORGANELLAR"/>
    <property type="match status" value="1"/>
</dbReference>
<dbReference type="PANTHER" id="PTHR12534:SF0">
    <property type="entry name" value="SMALL RIBOSOMAL SUBUNIT PROTEIN US2M"/>
    <property type="match status" value="1"/>
</dbReference>
<dbReference type="Pfam" id="PF00318">
    <property type="entry name" value="Ribosomal_S2"/>
    <property type="match status" value="1"/>
</dbReference>
<dbReference type="PRINTS" id="PR00395">
    <property type="entry name" value="RIBOSOMALS2"/>
</dbReference>
<dbReference type="SUPFAM" id="SSF52313">
    <property type="entry name" value="Ribosomal protein S2"/>
    <property type="match status" value="1"/>
</dbReference>
<dbReference type="PROSITE" id="PS00962">
    <property type="entry name" value="RIBOSOMAL_S2_1"/>
    <property type="match status" value="1"/>
</dbReference>
<dbReference type="PROSITE" id="PS00963">
    <property type="entry name" value="RIBOSOMAL_S2_2"/>
    <property type="match status" value="1"/>
</dbReference>
<sequence>MSKIPSVNIKALLDAGVHFGHKTSRWNPKMASYIYGERDDVHIIDLRQSVALMSVALNAIYETVKKDGKILFVSTKIQASDIIAEYAEKCGQYYVNHRWLGGMLTNWKTIAGSIEKLNKLDKTLENEEALMGYTKKEILYMSRKKDKLLLSLAGIRNLNSKPDLLVVIDTNKEHIAINEAVKLNVPIVAVVDTNSNPDNVDYPIPGNDDSIRSIRLYCSLFADAALQGLEESMKASGVDMGAMQEHTDKGLTSKNVSKLKQAKKFSKTKNIDEETNTEFEKALNDADENKNSDNA</sequence>
<gene>
    <name evidence="1" type="primary">rpsB</name>
    <name type="ordered locus">RPR_02665</name>
</gene>
<reference key="1">
    <citation type="journal article" date="2009" name="PLoS ONE">
        <title>Genome sequence of the endosymbiont Rickettsia peacockii and comparison with virulent Rickettsia rickettsii: identification of virulence factors.</title>
        <authorList>
            <person name="Felsheim R.F."/>
            <person name="Kurtti T.J."/>
            <person name="Munderloh U.G."/>
        </authorList>
    </citation>
    <scope>NUCLEOTIDE SEQUENCE [LARGE SCALE GENOMIC DNA]</scope>
    <source>
        <strain>Rustic</strain>
    </source>
</reference>
<keyword id="KW-0687">Ribonucleoprotein</keyword>
<keyword id="KW-0689">Ribosomal protein</keyword>
<name>RS2_RICPU</name>
<organism>
    <name type="scientific">Rickettsia peacockii (strain Rustic)</name>
    <dbReference type="NCBI Taxonomy" id="562019"/>
    <lineage>
        <taxon>Bacteria</taxon>
        <taxon>Pseudomonadati</taxon>
        <taxon>Pseudomonadota</taxon>
        <taxon>Alphaproteobacteria</taxon>
        <taxon>Rickettsiales</taxon>
        <taxon>Rickettsiaceae</taxon>
        <taxon>Rickettsieae</taxon>
        <taxon>Rickettsia</taxon>
        <taxon>spotted fever group</taxon>
    </lineage>
</organism>
<comment type="similarity">
    <text evidence="1">Belongs to the universal ribosomal protein uS2 family.</text>
</comment>
<feature type="chain" id="PRO_1000204893" description="Small ribosomal subunit protein uS2">
    <location>
        <begin position="1"/>
        <end position="295"/>
    </location>
</feature>
<feature type="region of interest" description="Disordered" evidence="2">
    <location>
        <begin position="263"/>
        <end position="295"/>
    </location>
</feature>
<feature type="compositionally biased region" description="Basic and acidic residues" evidence="2">
    <location>
        <begin position="278"/>
        <end position="295"/>
    </location>
</feature>